<keyword id="KW-0056">Arginine metabolism</keyword>
<keyword id="KW-0520">NAD</keyword>
<keyword id="KW-0560">Oxidoreductase</keyword>
<name>ASTD_BURO1</name>
<organism>
    <name type="scientific">Burkholderia orbicola (strain AU 1054)</name>
    <dbReference type="NCBI Taxonomy" id="331271"/>
    <lineage>
        <taxon>Bacteria</taxon>
        <taxon>Pseudomonadati</taxon>
        <taxon>Pseudomonadota</taxon>
        <taxon>Betaproteobacteria</taxon>
        <taxon>Burkholderiales</taxon>
        <taxon>Burkholderiaceae</taxon>
        <taxon>Burkholderia</taxon>
        <taxon>Burkholderia cepacia complex</taxon>
        <taxon>Burkholderia orbicola</taxon>
    </lineage>
</organism>
<sequence>MTELFIDGAWVAGSGPVFASRNPGTDAVAWQGESASAADVDRAVASARRAFAGWSALDFEARCEIVKRFAALLTERKEAIATAIGRETGKPLWEARTEVASMAAKVGISIQAYQERTGEKRQDMADGVAVLRHRPHGVVAVFGPYNFPGHLPNGHIVPALIAGNTVVFKPSELAPGVARATVEVWQEAGLPAGVLNLVQGEKDTGIALANHRQIDGLFFTGSSDTGTLLHKQFGGRPEIVLALEMGGNNPLVIGEVEDIDAAVHHTIQSAFLSAGQRCTCARRIFVPQGAFGDRFLARFADVTSKITADVFDADPQPFMGAVISARAAAKLVDAQARLVEQGAKPIVAMAQRDPRLGFVNAAIVDVTGVANLPDEEHFGPLAQVVRYATFDEAIERANDTAFGLSAGLLADDAKVWEHFRRTIRAGIVNWNRPTNGASSAAPFGGTGRSGNHRPSAYYAADYCAYPMASVESTQLTLPASLSPGLHF</sequence>
<feature type="chain" id="PRO_0000262387" description="N-succinylglutamate 5-semialdehyde dehydrogenase">
    <location>
        <begin position="1"/>
        <end position="487"/>
    </location>
</feature>
<feature type="active site" evidence="1">
    <location>
        <position position="244"/>
    </location>
</feature>
<feature type="active site" evidence="1">
    <location>
        <position position="278"/>
    </location>
</feature>
<feature type="binding site" evidence="1">
    <location>
        <begin position="221"/>
        <end position="226"/>
    </location>
    <ligand>
        <name>NAD(+)</name>
        <dbReference type="ChEBI" id="CHEBI:57540"/>
    </ligand>
</feature>
<reference key="1">
    <citation type="submission" date="2006-05" db="EMBL/GenBank/DDBJ databases">
        <title>Complete sequence of chromosome 1 of Burkholderia cenocepacia AU 1054.</title>
        <authorList>
            <consortium name="US DOE Joint Genome Institute"/>
            <person name="Copeland A."/>
            <person name="Lucas S."/>
            <person name="Lapidus A."/>
            <person name="Barry K."/>
            <person name="Detter J.C."/>
            <person name="Glavina del Rio T."/>
            <person name="Hammon N."/>
            <person name="Israni S."/>
            <person name="Dalin E."/>
            <person name="Tice H."/>
            <person name="Pitluck S."/>
            <person name="Chain P."/>
            <person name="Malfatti S."/>
            <person name="Shin M."/>
            <person name="Vergez L."/>
            <person name="Schmutz J."/>
            <person name="Larimer F."/>
            <person name="Land M."/>
            <person name="Hauser L."/>
            <person name="Kyrpides N."/>
            <person name="Lykidis A."/>
            <person name="LiPuma J.J."/>
            <person name="Konstantinidis K."/>
            <person name="Tiedje J.M."/>
            <person name="Richardson P."/>
        </authorList>
    </citation>
    <scope>NUCLEOTIDE SEQUENCE [LARGE SCALE GENOMIC DNA]</scope>
    <source>
        <strain>AU 1054</strain>
    </source>
</reference>
<accession>Q1BXP1</accession>
<gene>
    <name evidence="1" type="primary">astD</name>
    <name type="ordered locus">Bcen_0704</name>
</gene>
<proteinExistence type="inferred from homology"/>
<dbReference type="EC" id="1.2.1.71" evidence="1"/>
<dbReference type="EMBL" id="CP000378">
    <property type="protein sequence ID" value="ABF75614.1"/>
    <property type="molecule type" value="Genomic_DNA"/>
</dbReference>
<dbReference type="SMR" id="Q1BXP1"/>
<dbReference type="HOGENOM" id="CLU_005391_1_0_4"/>
<dbReference type="UniPathway" id="UPA00185">
    <property type="reaction ID" value="UER00282"/>
</dbReference>
<dbReference type="GO" id="GO:0043824">
    <property type="term" value="F:succinylglutamate-semialdehyde dehydrogenase activity"/>
    <property type="evidence" value="ECO:0007669"/>
    <property type="project" value="UniProtKB-EC"/>
</dbReference>
<dbReference type="GO" id="GO:0019544">
    <property type="term" value="P:arginine catabolic process to glutamate"/>
    <property type="evidence" value="ECO:0007669"/>
    <property type="project" value="UniProtKB-UniRule"/>
</dbReference>
<dbReference type="GO" id="GO:0019545">
    <property type="term" value="P:arginine catabolic process to succinate"/>
    <property type="evidence" value="ECO:0007669"/>
    <property type="project" value="UniProtKB-UniRule"/>
</dbReference>
<dbReference type="CDD" id="cd07095">
    <property type="entry name" value="ALDH_SGSD_AstD"/>
    <property type="match status" value="1"/>
</dbReference>
<dbReference type="FunFam" id="3.40.605.10:FF:000010">
    <property type="entry name" value="N-succinylglutamate 5-semialdehyde dehydrogenase"/>
    <property type="match status" value="1"/>
</dbReference>
<dbReference type="Gene3D" id="3.40.605.10">
    <property type="entry name" value="Aldehyde Dehydrogenase, Chain A, domain 1"/>
    <property type="match status" value="1"/>
</dbReference>
<dbReference type="Gene3D" id="3.40.309.10">
    <property type="entry name" value="Aldehyde Dehydrogenase, Chain A, domain 2"/>
    <property type="match status" value="1"/>
</dbReference>
<dbReference type="HAMAP" id="MF_01174">
    <property type="entry name" value="Aldedh_AstD"/>
    <property type="match status" value="1"/>
</dbReference>
<dbReference type="InterPro" id="IPR016161">
    <property type="entry name" value="Ald_DH/histidinol_DH"/>
</dbReference>
<dbReference type="InterPro" id="IPR016163">
    <property type="entry name" value="Ald_DH_C"/>
</dbReference>
<dbReference type="InterPro" id="IPR016160">
    <property type="entry name" value="Ald_DH_CS_CYS"/>
</dbReference>
<dbReference type="InterPro" id="IPR029510">
    <property type="entry name" value="Ald_DH_CS_GLU"/>
</dbReference>
<dbReference type="InterPro" id="IPR016162">
    <property type="entry name" value="Ald_DH_N"/>
</dbReference>
<dbReference type="InterPro" id="IPR015590">
    <property type="entry name" value="Aldehyde_DH_dom"/>
</dbReference>
<dbReference type="InterPro" id="IPR017649">
    <property type="entry name" value="SuccinylGlu_semiald_DH_AstD"/>
</dbReference>
<dbReference type="NCBIfam" id="TIGR03240">
    <property type="entry name" value="arg_catab_astD"/>
    <property type="match status" value="1"/>
</dbReference>
<dbReference type="NCBIfam" id="NF006992">
    <property type="entry name" value="PRK09457.1"/>
    <property type="match status" value="1"/>
</dbReference>
<dbReference type="PANTHER" id="PTHR11699">
    <property type="entry name" value="ALDEHYDE DEHYDROGENASE-RELATED"/>
    <property type="match status" value="1"/>
</dbReference>
<dbReference type="Pfam" id="PF00171">
    <property type="entry name" value="Aldedh"/>
    <property type="match status" value="1"/>
</dbReference>
<dbReference type="SUPFAM" id="SSF53720">
    <property type="entry name" value="ALDH-like"/>
    <property type="match status" value="1"/>
</dbReference>
<dbReference type="PROSITE" id="PS00070">
    <property type="entry name" value="ALDEHYDE_DEHYDR_CYS"/>
    <property type="match status" value="1"/>
</dbReference>
<dbReference type="PROSITE" id="PS00687">
    <property type="entry name" value="ALDEHYDE_DEHYDR_GLU"/>
    <property type="match status" value="1"/>
</dbReference>
<comment type="function">
    <text evidence="1">Catalyzes the NAD-dependent reduction of succinylglutamate semialdehyde into succinylglutamate.</text>
</comment>
<comment type="catalytic activity">
    <reaction evidence="1">
        <text>N-succinyl-L-glutamate 5-semialdehyde + NAD(+) + H2O = N-succinyl-L-glutamate + NADH + 2 H(+)</text>
        <dbReference type="Rhea" id="RHEA:10812"/>
        <dbReference type="ChEBI" id="CHEBI:15377"/>
        <dbReference type="ChEBI" id="CHEBI:15378"/>
        <dbReference type="ChEBI" id="CHEBI:57540"/>
        <dbReference type="ChEBI" id="CHEBI:57945"/>
        <dbReference type="ChEBI" id="CHEBI:58520"/>
        <dbReference type="ChEBI" id="CHEBI:58763"/>
        <dbReference type="EC" id="1.2.1.71"/>
    </reaction>
</comment>
<comment type="pathway">
    <text evidence="1">Amino-acid degradation; L-arginine degradation via AST pathway; L-glutamate and succinate from L-arginine: step 4/5.</text>
</comment>
<comment type="similarity">
    <text evidence="1">Belongs to the aldehyde dehydrogenase family. AstD subfamily.</text>
</comment>
<evidence type="ECO:0000255" key="1">
    <source>
        <dbReference type="HAMAP-Rule" id="MF_01174"/>
    </source>
</evidence>
<protein>
    <recommendedName>
        <fullName evidence="1">N-succinylglutamate 5-semialdehyde dehydrogenase</fullName>
        <ecNumber evidence="1">1.2.1.71</ecNumber>
    </recommendedName>
    <alternativeName>
        <fullName evidence="1">Succinylglutamic semialdehyde dehydrogenase</fullName>
        <shortName evidence="1">SGSD</shortName>
    </alternativeName>
</protein>